<accession>A0A3Q1LFG5</accession>
<proteinExistence type="evidence at protein level"/>
<comment type="subcellular location">
    <subcellularLocation>
        <location evidence="2">Cytoplasm</location>
        <location evidence="2">Cytoskeleton</location>
        <location evidence="2">Flagellum axoneme</location>
    </subcellularLocation>
    <text evidence="2">Associated with axonemal doublet microtubules in the sperm flagellum.</text>
</comment>
<comment type="tissue specificity">
    <text evidence="2">Detected in the sperm flagellum (at protein level).</text>
</comment>
<comment type="similarity">
    <text evidence="4">Belongs to the CIMIP3-like family.</text>
</comment>
<sequence length="192" mass="21204">MLLAEEFAESALHRRVLFHAAAGRAGAEGGPSLPRLPCSGLDSAPSPRGPLPGHAPRRPPRPRTGRQVLGAPPLSEKCELPGQDSQKSSVPSHGPKTPSGQKVKAPHRPLSLSWKQDREQTLAAAYVPVVVDPRGQNPEKLRFNFYTSQYSNSLNPFYTLQKPTCGYLYRRDTDHTRKRFDVPPANLVLWRS</sequence>
<name>CIMP3_BOVIN</name>
<keyword id="KW-0002">3D-structure</keyword>
<keyword id="KW-0966">Cell projection</keyword>
<keyword id="KW-0969">Cilium</keyword>
<keyword id="KW-0963">Cytoplasm</keyword>
<keyword id="KW-0206">Cytoskeleton</keyword>
<keyword id="KW-0282">Flagellum</keyword>
<keyword id="KW-1185">Reference proteome</keyword>
<evidence type="ECO:0000256" key="1">
    <source>
        <dbReference type="SAM" id="MobiDB-lite"/>
    </source>
</evidence>
<evidence type="ECO:0000269" key="2">
    <source>
    </source>
</evidence>
<evidence type="ECO:0000303" key="3">
    <source>
    </source>
</evidence>
<evidence type="ECO:0000305" key="4"/>
<evidence type="ECO:0000312" key="5">
    <source>
        <dbReference type="Proteomes" id="UP000009136"/>
    </source>
</evidence>
<evidence type="ECO:0007744" key="6">
    <source>
        <dbReference type="PDB" id="8OTZ"/>
    </source>
</evidence>
<feature type="chain" id="PRO_0000461953" description="Ciliary microtubule inner protein 3">
    <location>
        <begin position="1"/>
        <end position="192"/>
    </location>
</feature>
<feature type="region of interest" description="Disordered" evidence="1">
    <location>
        <begin position="24"/>
        <end position="108"/>
    </location>
</feature>
<feature type="compositionally biased region" description="Basic residues" evidence="1">
    <location>
        <begin position="55"/>
        <end position="64"/>
    </location>
</feature>
<gene>
    <name evidence="3" type="primary">CIMIP3</name>
</gene>
<dbReference type="PDB" id="8OTZ">
    <property type="method" value="EM"/>
    <property type="resolution" value="3.60 A"/>
    <property type="chains" value="Db/Dc/Dd=1-192"/>
</dbReference>
<dbReference type="PDBsum" id="8OTZ"/>
<dbReference type="EMDB" id="EMD-17187"/>
<dbReference type="EMDB" id="EMD-50664"/>
<dbReference type="PaxDb" id="9913-ENSBTAP00000017035"/>
<dbReference type="Ensembl" id="ENSBTAT00000067207.2">
    <property type="protein sequence ID" value="ENSBTAP00000056901.1"/>
    <property type="gene ID" value="ENSBTAG00000012822.6"/>
</dbReference>
<dbReference type="VEuPathDB" id="HostDB:ENSBTAG00000012822"/>
<dbReference type="GeneTree" id="ENSGT00390000014226"/>
<dbReference type="InParanoid" id="A0A3Q1LFG5"/>
<dbReference type="OMA" id="PLAGNCE"/>
<dbReference type="Proteomes" id="UP000009136">
    <property type="component" value="Chromosome 23"/>
</dbReference>
<dbReference type="Bgee" id="ENSBTAG00000012822">
    <property type="expression patterns" value="Expressed in semen and 93 other cell types or tissues"/>
</dbReference>
<dbReference type="InterPro" id="IPR054446">
    <property type="entry name" value="CIMIP3-like"/>
</dbReference>
<dbReference type="PANTHER" id="PTHR35444">
    <property type="entry name" value="RIKEN CDNA 1700001C19 GENE"/>
    <property type="match status" value="1"/>
</dbReference>
<dbReference type="PANTHER" id="PTHR35444:SF1">
    <property type="entry name" value="RIKEN CDNA 1700001C19 GENE"/>
    <property type="match status" value="1"/>
</dbReference>
<dbReference type="Pfam" id="PF22581">
    <property type="entry name" value="CIMIP3"/>
    <property type="match status" value="1"/>
</dbReference>
<protein>
    <recommendedName>
        <fullName evidence="3">Ciliary microtubule inner protein 3</fullName>
    </recommendedName>
</protein>
<reference evidence="5" key="1">
    <citation type="submission" date="2018-03" db="EMBL/GenBank/DDBJ databases">
        <title>ARS-UCD1.2.</title>
        <authorList>
            <person name="Rosen B.D."/>
            <person name="Bickhart D.M."/>
            <person name="Koren S."/>
            <person name="Schnabel R.D."/>
            <person name="Hall R."/>
            <person name="Zimin A."/>
            <person name="Dreischer C."/>
            <person name="Schultheiss S."/>
            <person name="Schroeder S.G."/>
            <person name="Elsik C.G."/>
            <person name="Couldrey C."/>
            <person name="Liu G.E."/>
            <person name="Van Tassell C.P."/>
            <person name="Phillippy A.M."/>
            <person name="Smith T.P.L."/>
            <person name="Medrano J.F."/>
        </authorList>
    </citation>
    <scope>NUCLEOTIDE SEQUENCE [LARGE SCALE GENOMIC DNA]</scope>
    <source>
        <strain evidence="5">Hereford</strain>
    </source>
</reference>
<reference evidence="6" key="2">
    <citation type="journal article" date="2023" name="Cell">
        <title>Structural specializations of the sperm tail.</title>
        <authorList>
            <person name="Leung M.R."/>
            <person name="Zeng J."/>
            <person name="Wang X."/>
            <person name="Roelofs M.C."/>
            <person name="Huang W."/>
            <person name="Zenezini Chiozzi R."/>
            <person name="Hevler J.F."/>
            <person name="Heck A.J.R."/>
            <person name="Dutcher S.K."/>
            <person name="Brown A."/>
            <person name="Zhang R."/>
            <person name="Zeev-Ben-Mordehai T."/>
        </authorList>
    </citation>
    <scope>STRUCTURE BY ELECTRON MICROSCOPY (3.60 ANGSTROMS)</scope>
    <scope>SUBCELLULAR LOCATION</scope>
    <scope>TISSUE SPECIFICITY</scope>
</reference>
<organism evidence="5">
    <name type="scientific">Bos taurus</name>
    <name type="common">Bovine</name>
    <dbReference type="NCBI Taxonomy" id="9913"/>
    <lineage>
        <taxon>Eukaryota</taxon>
        <taxon>Metazoa</taxon>
        <taxon>Chordata</taxon>
        <taxon>Craniata</taxon>
        <taxon>Vertebrata</taxon>
        <taxon>Euteleostomi</taxon>
        <taxon>Mammalia</taxon>
        <taxon>Eutheria</taxon>
        <taxon>Laurasiatheria</taxon>
        <taxon>Artiodactyla</taxon>
        <taxon>Ruminantia</taxon>
        <taxon>Pecora</taxon>
        <taxon>Bovidae</taxon>
        <taxon>Bovinae</taxon>
        <taxon>Bos</taxon>
    </lineage>
</organism>